<protein>
    <recommendedName>
        <fullName>Protein FAM78A</fullName>
    </recommendedName>
</protein>
<gene>
    <name type="primary">FAM78A</name>
    <name type="synonym">C9orf59</name>
</gene>
<accession>Q5JUQ0</accession>
<accession>Q86VQ9</accession>
<accession>Q9H7P4</accession>
<feature type="chain" id="PRO_0000265112" description="Protein FAM78A">
    <location>
        <begin position="1"/>
        <end position="283"/>
    </location>
</feature>
<dbReference type="EMBL" id="AL157938">
    <property type="status" value="NOT_ANNOTATED_CDS"/>
    <property type="molecule type" value="Genomic_DNA"/>
</dbReference>
<dbReference type="EMBL" id="BC049388">
    <property type="protein sequence ID" value="AAH49388.1"/>
    <property type="status" value="ALT_INIT"/>
    <property type="molecule type" value="mRNA"/>
</dbReference>
<dbReference type="EMBL" id="AK024434">
    <property type="protein sequence ID" value="BAB15724.1"/>
    <property type="molecule type" value="mRNA"/>
</dbReference>
<dbReference type="CCDS" id="CCDS6941.2"/>
<dbReference type="RefSeq" id="NP_001386388.1">
    <property type="nucleotide sequence ID" value="NM_001399459.1"/>
</dbReference>
<dbReference type="RefSeq" id="NP_001387510.1">
    <property type="nucleotide sequence ID" value="NM_001400581.1"/>
</dbReference>
<dbReference type="RefSeq" id="NP_203745.2">
    <property type="nucleotide sequence ID" value="NM_033387.4"/>
</dbReference>
<dbReference type="BioGRID" id="130355">
    <property type="interactions" value="5"/>
</dbReference>
<dbReference type="FunCoup" id="Q5JUQ0">
    <property type="interactions" value="9"/>
</dbReference>
<dbReference type="IntAct" id="Q5JUQ0">
    <property type="interactions" value="4"/>
</dbReference>
<dbReference type="STRING" id="9606.ENSP00000361345"/>
<dbReference type="GlyGen" id="Q5JUQ0">
    <property type="glycosylation" value="2 sites, 1 O-linked glycan (2 sites)"/>
</dbReference>
<dbReference type="iPTMnet" id="Q5JUQ0"/>
<dbReference type="PhosphoSitePlus" id="Q5JUQ0"/>
<dbReference type="SwissPalm" id="Q5JUQ0"/>
<dbReference type="BioMuta" id="FAM78A"/>
<dbReference type="DMDM" id="74742326"/>
<dbReference type="MassIVE" id="Q5JUQ0"/>
<dbReference type="PaxDb" id="9606-ENSP00000361345"/>
<dbReference type="PeptideAtlas" id="Q5JUQ0"/>
<dbReference type="ProteomicsDB" id="63285"/>
<dbReference type="Pumba" id="Q5JUQ0"/>
<dbReference type="Antibodypedia" id="18087">
    <property type="antibodies" value="112 antibodies from 19 providers"/>
</dbReference>
<dbReference type="DNASU" id="286336"/>
<dbReference type="Ensembl" id="ENST00000372271.4">
    <property type="protein sequence ID" value="ENSP00000361345.3"/>
    <property type="gene ID" value="ENSG00000126882.14"/>
</dbReference>
<dbReference type="Ensembl" id="ENST00000704762.1">
    <property type="protein sequence ID" value="ENSP00000516028.1"/>
    <property type="gene ID" value="ENSG00000126882.14"/>
</dbReference>
<dbReference type="GeneID" id="286336"/>
<dbReference type="KEGG" id="hsa:286336"/>
<dbReference type="MANE-Select" id="ENST00000372271.4">
    <property type="protein sequence ID" value="ENSP00000361345.3"/>
    <property type="RefSeq nucleotide sequence ID" value="NM_033387.4"/>
    <property type="RefSeq protein sequence ID" value="NP_203745.2"/>
</dbReference>
<dbReference type="UCSC" id="uc004cak.4">
    <property type="organism name" value="human"/>
</dbReference>
<dbReference type="AGR" id="HGNC:25465"/>
<dbReference type="CTD" id="286336"/>
<dbReference type="DisGeNET" id="286336"/>
<dbReference type="GeneCards" id="FAM78A"/>
<dbReference type="HGNC" id="HGNC:25465">
    <property type="gene designation" value="FAM78A"/>
</dbReference>
<dbReference type="HPA" id="ENSG00000126882">
    <property type="expression patterns" value="Tissue enhanced (skeletal muscle, testis)"/>
</dbReference>
<dbReference type="neXtProt" id="NX_Q5JUQ0"/>
<dbReference type="OpenTargets" id="ENSG00000126882"/>
<dbReference type="PharmGKB" id="PA134970135"/>
<dbReference type="VEuPathDB" id="HostDB:ENSG00000126882"/>
<dbReference type="eggNOG" id="ENOG502QPXK">
    <property type="taxonomic scope" value="Eukaryota"/>
</dbReference>
<dbReference type="GeneTree" id="ENSGT00390000018059"/>
<dbReference type="HOGENOM" id="CLU_085745_0_0_1"/>
<dbReference type="InParanoid" id="Q5JUQ0"/>
<dbReference type="OMA" id="MQLNIEV"/>
<dbReference type="OrthoDB" id="9971204at2759"/>
<dbReference type="PAN-GO" id="Q5JUQ0">
    <property type="GO annotations" value="0 GO annotations based on evolutionary models"/>
</dbReference>
<dbReference type="PhylomeDB" id="Q5JUQ0"/>
<dbReference type="TreeFam" id="TF329533"/>
<dbReference type="PathwayCommons" id="Q5JUQ0"/>
<dbReference type="SignaLink" id="Q5JUQ0"/>
<dbReference type="BioGRID-ORCS" id="286336">
    <property type="hits" value="20 hits in 1163 CRISPR screens"/>
</dbReference>
<dbReference type="ChiTaRS" id="FAM78A">
    <property type="organism name" value="human"/>
</dbReference>
<dbReference type="GenomeRNAi" id="286336"/>
<dbReference type="Pharos" id="Q5JUQ0">
    <property type="development level" value="Tdark"/>
</dbReference>
<dbReference type="PRO" id="PR:Q5JUQ0"/>
<dbReference type="Proteomes" id="UP000005640">
    <property type="component" value="Chromosome 9"/>
</dbReference>
<dbReference type="RNAct" id="Q5JUQ0">
    <property type="molecule type" value="protein"/>
</dbReference>
<dbReference type="Bgee" id="ENSG00000126882">
    <property type="expression patterns" value="Expressed in granulocyte and 176 other cell types or tissues"/>
</dbReference>
<dbReference type="ExpressionAtlas" id="Q5JUQ0">
    <property type="expression patterns" value="baseline and differential"/>
</dbReference>
<dbReference type="InterPro" id="IPR029638">
    <property type="entry name" value="FAM78"/>
</dbReference>
<dbReference type="PANTHER" id="PTHR31655">
    <property type="entry name" value="PROTEIN FAM78A"/>
    <property type="match status" value="1"/>
</dbReference>
<dbReference type="PANTHER" id="PTHR31655:SF3">
    <property type="entry name" value="PROTEIN FAM78A"/>
    <property type="match status" value="1"/>
</dbReference>
<organism>
    <name type="scientific">Homo sapiens</name>
    <name type="common">Human</name>
    <dbReference type="NCBI Taxonomy" id="9606"/>
    <lineage>
        <taxon>Eukaryota</taxon>
        <taxon>Metazoa</taxon>
        <taxon>Chordata</taxon>
        <taxon>Craniata</taxon>
        <taxon>Vertebrata</taxon>
        <taxon>Euteleostomi</taxon>
        <taxon>Mammalia</taxon>
        <taxon>Eutheria</taxon>
        <taxon>Euarchontoglires</taxon>
        <taxon>Primates</taxon>
        <taxon>Haplorrhini</taxon>
        <taxon>Catarrhini</taxon>
        <taxon>Hominidae</taxon>
        <taxon>Homo</taxon>
    </lineage>
</organism>
<reference key="1">
    <citation type="journal article" date="2004" name="Nature">
        <title>DNA sequence and analysis of human chromosome 9.</title>
        <authorList>
            <person name="Humphray S.J."/>
            <person name="Oliver K."/>
            <person name="Hunt A.R."/>
            <person name="Plumb R.W."/>
            <person name="Loveland J.E."/>
            <person name="Howe K.L."/>
            <person name="Andrews T.D."/>
            <person name="Searle S."/>
            <person name="Hunt S.E."/>
            <person name="Scott C.E."/>
            <person name="Jones M.C."/>
            <person name="Ainscough R."/>
            <person name="Almeida J.P."/>
            <person name="Ambrose K.D."/>
            <person name="Ashwell R.I.S."/>
            <person name="Babbage A.K."/>
            <person name="Babbage S."/>
            <person name="Bagguley C.L."/>
            <person name="Bailey J."/>
            <person name="Banerjee R."/>
            <person name="Barker D.J."/>
            <person name="Barlow K.F."/>
            <person name="Bates K."/>
            <person name="Beasley H."/>
            <person name="Beasley O."/>
            <person name="Bird C.P."/>
            <person name="Bray-Allen S."/>
            <person name="Brown A.J."/>
            <person name="Brown J.Y."/>
            <person name="Burford D."/>
            <person name="Burrill W."/>
            <person name="Burton J."/>
            <person name="Carder C."/>
            <person name="Carter N.P."/>
            <person name="Chapman J.C."/>
            <person name="Chen Y."/>
            <person name="Clarke G."/>
            <person name="Clark S.Y."/>
            <person name="Clee C.M."/>
            <person name="Clegg S."/>
            <person name="Collier R.E."/>
            <person name="Corby N."/>
            <person name="Crosier M."/>
            <person name="Cummings A.T."/>
            <person name="Davies J."/>
            <person name="Dhami P."/>
            <person name="Dunn M."/>
            <person name="Dutta I."/>
            <person name="Dyer L.W."/>
            <person name="Earthrowl M.E."/>
            <person name="Faulkner L."/>
            <person name="Fleming C.J."/>
            <person name="Frankish A."/>
            <person name="Frankland J.A."/>
            <person name="French L."/>
            <person name="Fricker D.G."/>
            <person name="Garner P."/>
            <person name="Garnett J."/>
            <person name="Ghori J."/>
            <person name="Gilbert J.G.R."/>
            <person name="Glison C."/>
            <person name="Grafham D.V."/>
            <person name="Gribble S."/>
            <person name="Griffiths C."/>
            <person name="Griffiths-Jones S."/>
            <person name="Grocock R."/>
            <person name="Guy J."/>
            <person name="Hall R.E."/>
            <person name="Hammond S."/>
            <person name="Harley J.L."/>
            <person name="Harrison E.S.I."/>
            <person name="Hart E.A."/>
            <person name="Heath P.D."/>
            <person name="Henderson C.D."/>
            <person name="Hopkins B.L."/>
            <person name="Howard P.J."/>
            <person name="Howden P.J."/>
            <person name="Huckle E."/>
            <person name="Johnson C."/>
            <person name="Johnson D."/>
            <person name="Joy A.A."/>
            <person name="Kay M."/>
            <person name="Keenan S."/>
            <person name="Kershaw J.K."/>
            <person name="Kimberley A.M."/>
            <person name="King A."/>
            <person name="Knights A."/>
            <person name="Laird G.K."/>
            <person name="Langford C."/>
            <person name="Lawlor S."/>
            <person name="Leongamornlert D.A."/>
            <person name="Leversha M."/>
            <person name="Lloyd C."/>
            <person name="Lloyd D.M."/>
            <person name="Lovell J."/>
            <person name="Martin S."/>
            <person name="Mashreghi-Mohammadi M."/>
            <person name="Matthews L."/>
            <person name="McLaren S."/>
            <person name="McLay K.E."/>
            <person name="McMurray A."/>
            <person name="Milne S."/>
            <person name="Nickerson T."/>
            <person name="Nisbett J."/>
            <person name="Nordsiek G."/>
            <person name="Pearce A.V."/>
            <person name="Peck A.I."/>
            <person name="Porter K.M."/>
            <person name="Pandian R."/>
            <person name="Pelan S."/>
            <person name="Phillimore B."/>
            <person name="Povey S."/>
            <person name="Ramsey Y."/>
            <person name="Rand V."/>
            <person name="Scharfe M."/>
            <person name="Sehra H.K."/>
            <person name="Shownkeen R."/>
            <person name="Sims S.K."/>
            <person name="Skuce C.D."/>
            <person name="Smith M."/>
            <person name="Steward C.A."/>
            <person name="Swarbreck D."/>
            <person name="Sycamore N."/>
            <person name="Tester J."/>
            <person name="Thorpe A."/>
            <person name="Tracey A."/>
            <person name="Tromans A."/>
            <person name="Thomas D.W."/>
            <person name="Wall M."/>
            <person name="Wallis J.M."/>
            <person name="West A.P."/>
            <person name="Whitehead S.L."/>
            <person name="Willey D.L."/>
            <person name="Williams S.A."/>
            <person name="Wilming L."/>
            <person name="Wray P.W."/>
            <person name="Young L."/>
            <person name="Ashurst J.L."/>
            <person name="Coulson A."/>
            <person name="Blocker H."/>
            <person name="Durbin R.M."/>
            <person name="Sulston J.E."/>
            <person name="Hubbard T."/>
            <person name="Jackson M.J."/>
            <person name="Bentley D.R."/>
            <person name="Beck S."/>
            <person name="Rogers J."/>
            <person name="Dunham I."/>
        </authorList>
    </citation>
    <scope>NUCLEOTIDE SEQUENCE [LARGE SCALE GENOMIC DNA]</scope>
</reference>
<reference key="2">
    <citation type="journal article" date="2004" name="Genome Res.">
        <title>The status, quality, and expansion of the NIH full-length cDNA project: the Mammalian Gene Collection (MGC).</title>
        <authorList>
            <consortium name="The MGC Project Team"/>
        </authorList>
    </citation>
    <scope>NUCLEOTIDE SEQUENCE [LARGE SCALE MRNA]</scope>
    <source>
        <tissue>Skin</tissue>
    </source>
</reference>
<reference key="3">
    <citation type="journal article" date="2004" name="Nat. Genet.">
        <title>Complete sequencing and characterization of 21,243 full-length human cDNAs.</title>
        <authorList>
            <person name="Ota T."/>
            <person name="Suzuki Y."/>
            <person name="Nishikawa T."/>
            <person name="Otsuki T."/>
            <person name="Sugiyama T."/>
            <person name="Irie R."/>
            <person name="Wakamatsu A."/>
            <person name="Hayashi K."/>
            <person name="Sato H."/>
            <person name="Nagai K."/>
            <person name="Kimura K."/>
            <person name="Makita H."/>
            <person name="Sekine M."/>
            <person name="Obayashi M."/>
            <person name="Nishi T."/>
            <person name="Shibahara T."/>
            <person name="Tanaka T."/>
            <person name="Ishii S."/>
            <person name="Yamamoto J."/>
            <person name="Saito K."/>
            <person name="Kawai Y."/>
            <person name="Isono Y."/>
            <person name="Nakamura Y."/>
            <person name="Nagahari K."/>
            <person name="Murakami K."/>
            <person name="Yasuda T."/>
            <person name="Iwayanagi T."/>
            <person name="Wagatsuma M."/>
            <person name="Shiratori A."/>
            <person name="Sudo H."/>
            <person name="Hosoiri T."/>
            <person name="Kaku Y."/>
            <person name="Kodaira H."/>
            <person name="Kondo H."/>
            <person name="Sugawara M."/>
            <person name="Takahashi M."/>
            <person name="Kanda K."/>
            <person name="Yokoi T."/>
            <person name="Furuya T."/>
            <person name="Kikkawa E."/>
            <person name="Omura Y."/>
            <person name="Abe K."/>
            <person name="Kamihara K."/>
            <person name="Katsuta N."/>
            <person name="Sato K."/>
            <person name="Tanikawa M."/>
            <person name="Yamazaki M."/>
            <person name="Ninomiya K."/>
            <person name="Ishibashi T."/>
            <person name="Yamashita H."/>
            <person name="Murakawa K."/>
            <person name="Fujimori K."/>
            <person name="Tanai H."/>
            <person name="Kimata M."/>
            <person name="Watanabe M."/>
            <person name="Hiraoka S."/>
            <person name="Chiba Y."/>
            <person name="Ishida S."/>
            <person name="Ono Y."/>
            <person name="Takiguchi S."/>
            <person name="Watanabe S."/>
            <person name="Yosida M."/>
            <person name="Hotuta T."/>
            <person name="Kusano J."/>
            <person name="Kanehori K."/>
            <person name="Takahashi-Fujii A."/>
            <person name="Hara H."/>
            <person name="Tanase T.-O."/>
            <person name="Nomura Y."/>
            <person name="Togiya S."/>
            <person name="Komai F."/>
            <person name="Hara R."/>
            <person name="Takeuchi K."/>
            <person name="Arita M."/>
            <person name="Imose N."/>
            <person name="Musashino K."/>
            <person name="Yuuki H."/>
            <person name="Oshima A."/>
            <person name="Sasaki N."/>
            <person name="Aotsuka S."/>
            <person name="Yoshikawa Y."/>
            <person name="Matsunawa H."/>
            <person name="Ichihara T."/>
            <person name="Shiohata N."/>
            <person name="Sano S."/>
            <person name="Moriya S."/>
            <person name="Momiyama H."/>
            <person name="Satoh N."/>
            <person name="Takami S."/>
            <person name="Terashima Y."/>
            <person name="Suzuki O."/>
            <person name="Nakagawa S."/>
            <person name="Senoh A."/>
            <person name="Mizoguchi H."/>
            <person name="Goto Y."/>
            <person name="Shimizu F."/>
            <person name="Wakebe H."/>
            <person name="Hishigaki H."/>
            <person name="Watanabe T."/>
            <person name="Sugiyama A."/>
            <person name="Takemoto M."/>
            <person name="Kawakami B."/>
            <person name="Yamazaki M."/>
            <person name="Watanabe K."/>
            <person name="Kumagai A."/>
            <person name="Itakura S."/>
            <person name="Fukuzumi Y."/>
            <person name="Fujimori Y."/>
            <person name="Komiyama M."/>
            <person name="Tashiro H."/>
            <person name="Tanigami A."/>
            <person name="Fujiwara T."/>
            <person name="Ono T."/>
            <person name="Yamada K."/>
            <person name="Fujii Y."/>
            <person name="Ozaki K."/>
            <person name="Hirao M."/>
            <person name="Ohmori Y."/>
            <person name="Kawabata A."/>
            <person name="Hikiji T."/>
            <person name="Kobatake N."/>
            <person name="Inagaki H."/>
            <person name="Ikema Y."/>
            <person name="Okamoto S."/>
            <person name="Okitani R."/>
            <person name="Kawakami T."/>
            <person name="Noguchi S."/>
            <person name="Itoh T."/>
            <person name="Shigeta K."/>
            <person name="Senba T."/>
            <person name="Matsumura K."/>
            <person name="Nakajima Y."/>
            <person name="Mizuno T."/>
            <person name="Morinaga M."/>
            <person name="Sasaki M."/>
            <person name="Togashi T."/>
            <person name="Oyama M."/>
            <person name="Hata H."/>
            <person name="Watanabe M."/>
            <person name="Komatsu T."/>
            <person name="Mizushima-Sugano J."/>
            <person name="Satoh T."/>
            <person name="Shirai Y."/>
            <person name="Takahashi Y."/>
            <person name="Nakagawa K."/>
            <person name="Okumura K."/>
            <person name="Nagase T."/>
            <person name="Nomura N."/>
            <person name="Kikuchi H."/>
            <person name="Masuho Y."/>
            <person name="Yamashita R."/>
            <person name="Nakai K."/>
            <person name="Yada T."/>
            <person name="Nakamura Y."/>
            <person name="Ohara O."/>
            <person name="Isogai T."/>
            <person name="Sugano S."/>
        </authorList>
    </citation>
    <scope>NUCLEOTIDE SEQUENCE [LARGE SCALE MRNA] OF 89-283</scope>
    <source>
        <tissue>Spleen</tissue>
    </source>
</reference>
<keyword id="KW-1267">Proteomics identification</keyword>
<keyword id="KW-1185">Reference proteome</keyword>
<name>FA78A_HUMAN</name>
<comment type="interaction">
    <interactant intactId="EBI-21900888">
        <id>Q5JUQ0</id>
    </interactant>
    <interactant intactId="EBI-466029">
        <id>P42858</id>
        <label>HTT</label>
    </interactant>
    <organismsDiffer>false</organismsDiffer>
    <experiments>3</experiments>
</comment>
<comment type="interaction">
    <interactant intactId="EBI-21900888">
        <id>Q5JUQ0</id>
    </interactant>
    <interactant intactId="EBI-752057">
        <id>Q7Z412</id>
        <label>PEX26</label>
    </interactant>
    <organismsDiffer>false</organismsDiffer>
    <experiments>3</experiments>
</comment>
<comment type="interaction">
    <interactant intactId="EBI-21900888">
        <id>Q5JUQ0</id>
    </interactant>
    <interactant intactId="EBI-50433196">
        <id>A0A6Q8PF08</id>
        <label>PMP22</label>
    </interactant>
    <organismsDiffer>false</organismsDiffer>
    <experiments>3</experiments>
</comment>
<comment type="similarity">
    <text evidence="1">Belongs to the FAM78 family.</text>
</comment>
<comment type="sequence caution" evidence="1">
    <conflict type="erroneous initiation">
        <sequence resource="EMBL-CDS" id="AAH49388"/>
    </conflict>
</comment>
<proteinExistence type="evidence at protein level"/>
<sequence length="283" mass="31968">MPGFFCDCWPSLEIRALLYAMGCIQSIGGKARVFREGITVIDVKASIDPVPTSIDESSSVVLRYRTPHFRASAQVVMPPIPKKETWVVGWIQACSHMEFYNQYGEQGMSSWELPDLQEGKIQAISDSDGVNYPWYGNTTETCTIVGPTKRDSKFIISMNDNFYPSVTWAVPVSESNVAKLTNIYRDQSFTTWLVATNTSTNDMIILQTLHWRMQLSIEVNPNRPLGQRARLREPIAQDQPKILSKNEPIPPSALVKPNANDAQVLMWRPKYGQPLVVIPPKHR</sequence>
<evidence type="ECO:0000305" key="1"/>